<keyword id="KW-0963">Cytoplasm</keyword>
<keyword id="KW-0903">Direct protein sequencing</keyword>
<keyword id="KW-0460">Magnesium</keyword>
<keyword id="KW-0489">Methyltransferase</keyword>
<keyword id="KW-0808">Transferase</keyword>
<name>FKBM_STRTA</name>
<proteinExistence type="evidence at protein level"/>
<feature type="initiator methionine" description="Removed" evidence="1">
    <location>
        <position position="1"/>
    </location>
</feature>
<feature type="chain" id="PRO_0000415368" description="31-O-demethyl-FK506 methyltransferase FkbM">
    <location>
        <begin position="2"/>
        <end position="260"/>
    </location>
</feature>
<accession>P74838</accession>
<protein>
    <recommendedName>
        <fullName>31-O-demethyl-FK506 methyltransferase FkbM</fullName>
        <ecNumber>2.1.1.-</ecNumber>
    </recommendedName>
    <alternativeName>
        <fullName>FKMT</fullName>
    </alternativeName>
</protein>
<evidence type="ECO:0000269" key="1">
    <source>
    </source>
</evidence>
<evidence type="ECO:0000305" key="2"/>
<comment type="function">
    <text evidence="1">Involved in the biosynthesis of FK506, which is a macrolide antibiotic with immunosuppressant activity. Catalyzes the transfer of a methyl group from S-adenosyl-L-methionine to the 31-O-position of 31-O-demethyl-FK506. Also catalyzes the methylation of 31-O-demethylimmunomycin, the C31 transmethylation reaction of 13,31-O-bis-demethyl-, 15,31-O-bisdemethyl-, 13,15,31-O-trisdemethyl- and 31-O-19,22-cyclic-hemiketalimmunomycins, which are all structural analogs of FK506.</text>
</comment>
<comment type="cofactor">
    <cofactor evidence="1">
        <name>Mg(2+)</name>
        <dbReference type="ChEBI" id="CHEBI:18420"/>
    </cofactor>
</comment>
<comment type="activity regulation">
    <text evidence="1">Inhibited by S-adenosylhomocysteine and sinefungin.</text>
</comment>
<comment type="biophysicochemical properties">
    <kinetics>
        <KM evidence="1">23 uM for 31-O-demethyl-FK506 (at pH 7.4 and 34 degrees Celsius)</KM>
        <KM evidence="1">28 uM for S-adenosyl-L-methionine (at pH 7.4 and 34 degrees Celsius)</KM>
        <Vmax evidence="1">2.33 nmol/min/mg enzyme toward 31-O-demethyl-FK506 (at pH 7.4 and 34 degrees Celsius)</Vmax>
        <Vmax evidence="1">2.01 nmol/min/mg enzyme toward S-adenosyl-L-methionine (at pH 7.4 and 34 degrees Celsius)</Vmax>
    </kinetics>
    <phDependence>
        <text evidence="1">Optimum pH is 8.5.</text>
    </phDependence>
    <temperatureDependence>
        <text evidence="1">Optimum temperature is 34 degrees Celsius.</text>
    </temperatureDependence>
</comment>
<comment type="subunit">
    <text evidence="1">Monomer.</text>
</comment>
<comment type="subcellular location">
    <subcellularLocation>
        <location evidence="1">Cytoplasm</location>
    </subcellularLocation>
</comment>
<comment type="similarity">
    <text evidence="2">Belongs to the FkbM methyltransferase family.</text>
</comment>
<organism>
    <name type="scientific">Streptomyces tacrolimicus</name>
    <dbReference type="NCBI Taxonomy" id="330919"/>
    <lineage>
        <taxon>Bacteria</taxon>
        <taxon>Bacillati</taxon>
        <taxon>Actinomycetota</taxon>
        <taxon>Actinomycetes</taxon>
        <taxon>Kitasatosporales</taxon>
        <taxon>Streptomycetaceae</taxon>
        <taxon>Streptomyces</taxon>
    </lineage>
</organism>
<dbReference type="EC" id="2.1.1.-"/>
<dbReference type="EMBL" id="U65940">
    <property type="protein sequence ID" value="AAC44360.1"/>
    <property type="molecule type" value="Genomic_DNA"/>
</dbReference>
<dbReference type="KEGG" id="ag:AAC44360"/>
<dbReference type="BioCyc" id="MetaCyc:MONOMER-13930"/>
<dbReference type="GO" id="GO:0005737">
    <property type="term" value="C:cytoplasm"/>
    <property type="evidence" value="ECO:0007669"/>
    <property type="project" value="UniProtKB-SubCell"/>
</dbReference>
<dbReference type="GO" id="GO:0008168">
    <property type="term" value="F:methyltransferase activity"/>
    <property type="evidence" value="ECO:0007669"/>
    <property type="project" value="UniProtKB-KW"/>
</dbReference>
<dbReference type="GO" id="GO:0032259">
    <property type="term" value="P:methylation"/>
    <property type="evidence" value="ECO:0007669"/>
    <property type="project" value="UniProtKB-KW"/>
</dbReference>
<dbReference type="Gene3D" id="3.40.50.150">
    <property type="entry name" value="Vaccinia Virus protein VP39"/>
    <property type="match status" value="1"/>
</dbReference>
<dbReference type="InterPro" id="IPR006342">
    <property type="entry name" value="FkbM_mtfrase"/>
</dbReference>
<dbReference type="InterPro" id="IPR052514">
    <property type="entry name" value="SAM-dependent_MTase"/>
</dbReference>
<dbReference type="InterPro" id="IPR029063">
    <property type="entry name" value="SAM-dependent_MTases_sf"/>
</dbReference>
<dbReference type="NCBIfam" id="TIGR01444">
    <property type="entry name" value="fkbM_fam"/>
    <property type="match status" value="1"/>
</dbReference>
<dbReference type="PANTHER" id="PTHR34203:SF13">
    <property type="entry name" value="EXPRESSED PROTEIN"/>
    <property type="match status" value="1"/>
</dbReference>
<dbReference type="PANTHER" id="PTHR34203">
    <property type="entry name" value="METHYLTRANSFERASE, FKBM FAMILY PROTEIN"/>
    <property type="match status" value="1"/>
</dbReference>
<dbReference type="Pfam" id="PF05050">
    <property type="entry name" value="Methyltransf_21"/>
    <property type="match status" value="1"/>
</dbReference>
<dbReference type="SUPFAM" id="SSF53335">
    <property type="entry name" value="S-adenosyl-L-methionine-dependent methyltransferases"/>
    <property type="match status" value="1"/>
</dbReference>
<gene>
    <name type="primary">fkbM</name>
</gene>
<reference key="1">
    <citation type="journal article" date="1996" name="J. Bacteriol.">
        <title>Characterization of methyltransferase and hydroxylase genes involved in the biosynthesis of the immunosuppressants FK506 and FK520.</title>
        <authorList>
            <person name="Motamedi H."/>
            <person name="Shafiee A."/>
            <person name="Cai S.J."/>
            <person name="Streicher S.L."/>
            <person name="Arison B.H."/>
            <person name="Miller R.R."/>
        </authorList>
    </citation>
    <scope>NUCLEOTIDE SEQUENCE [GENOMIC DNA]</scope>
    <source>
        <strain>ATCC 55098 / CECT 7664 / MA 6858</strain>
    </source>
</reference>
<reference key="2">
    <citation type="journal article" date="1994" name="Eur. J. Biochem.">
        <title>Enzymology of FK-506 biosynthesis. Purification and characterization of 31-O-desmethylFK-506 O:methyltransferase from Streptomyces sp. MA6858.</title>
        <authorList>
            <person name="Shafiee A."/>
            <person name="Motamedi H."/>
            <person name="Chen T."/>
        </authorList>
    </citation>
    <scope>PROTEIN SEQUENCE OF 2-40</scope>
    <scope>FUNCTION</scope>
    <scope>COFACTOR</scope>
    <scope>ACTIVITY REGULATION</scope>
    <scope>BIOPHYSICOCHEMICAL PROPERTIES</scope>
    <scope>SUBUNIT</scope>
    <scope>SUBCELLULAR LOCATION</scope>
    <source>
        <strain>ATCC 55098 / CECT 7664 / MA 6858</strain>
    </source>
</reference>
<sequence>MSDVVETLRLPNGATVAHVNAGEAQFLYREIFTDRCYLRHGVELRPGDVVFDVGANIGMFMLFAHLEHPGVTVHAFEPAPVPFAALRANAVRHRVAGRVDQCAVSDEAGVRRMTFYPDATLMSGFHPDAAARKELLRTLGLNGGYTAEDVDMMLAQLPDTGEEIETSVVRLSDVIAERGIAAIGLLKIDVEKSERRVLAGVEDADWPRIRQVVAEVHDVDGALGEVVALLRGHGFTVVAEQDPLFAGTEIHQVAARRTAG</sequence>